<gene>
    <name evidence="1" type="primary">psaJ</name>
</gene>
<keyword id="KW-0150">Chloroplast</keyword>
<keyword id="KW-0472">Membrane</keyword>
<keyword id="KW-0602">Photosynthesis</keyword>
<keyword id="KW-0603">Photosystem I</keyword>
<keyword id="KW-0934">Plastid</keyword>
<keyword id="KW-0793">Thylakoid</keyword>
<keyword id="KW-0812">Transmembrane</keyword>
<keyword id="KW-1133">Transmembrane helix</keyword>
<organism>
    <name type="scientific">Larix decidua</name>
    <name type="common">European larch</name>
    <dbReference type="NCBI Taxonomy" id="71402"/>
    <lineage>
        <taxon>Eukaryota</taxon>
        <taxon>Viridiplantae</taxon>
        <taxon>Streptophyta</taxon>
        <taxon>Embryophyta</taxon>
        <taxon>Tracheophyta</taxon>
        <taxon>Spermatophyta</taxon>
        <taxon>Pinopsida</taxon>
        <taxon>Pinidae</taxon>
        <taxon>Conifers I</taxon>
        <taxon>Pinales</taxon>
        <taxon>Pinaceae</taxon>
        <taxon>Larix</taxon>
    </lineage>
</organism>
<protein>
    <recommendedName>
        <fullName evidence="1">Photosystem I reaction center subunit IX</fullName>
    </recommendedName>
    <alternativeName>
        <fullName evidence="1">PSI-J</fullName>
    </alternativeName>
</protein>
<comment type="function">
    <text evidence="1">May help in the organization of the PsaE and PsaF subunits.</text>
</comment>
<comment type="subcellular location">
    <subcellularLocation>
        <location evidence="1">Plastid</location>
        <location evidence="1">Chloroplast thylakoid membrane</location>
        <topology evidence="1">Single-pass membrane protein</topology>
    </subcellularLocation>
</comment>
<comment type="similarity">
    <text evidence="1">Belongs to the PsaJ family.</text>
</comment>
<dbReference type="EMBL" id="AY131246">
    <property type="protein sequence ID" value="AAN18234.1"/>
    <property type="molecule type" value="Genomic_DNA"/>
</dbReference>
<dbReference type="RefSeq" id="YP_004891257.1">
    <property type="nucleotide sequence ID" value="NC_016058.1"/>
</dbReference>
<dbReference type="SMR" id="Q85V00"/>
<dbReference type="GeneID" id="11258381"/>
<dbReference type="GO" id="GO:0009535">
    <property type="term" value="C:chloroplast thylakoid membrane"/>
    <property type="evidence" value="ECO:0007669"/>
    <property type="project" value="UniProtKB-SubCell"/>
</dbReference>
<dbReference type="GO" id="GO:0009522">
    <property type="term" value="C:photosystem I"/>
    <property type="evidence" value="ECO:0007669"/>
    <property type="project" value="UniProtKB-KW"/>
</dbReference>
<dbReference type="GO" id="GO:0015979">
    <property type="term" value="P:photosynthesis"/>
    <property type="evidence" value="ECO:0007669"/>
    <property type="project" value="UniProtKB-UniRule"/>
</dbReference>
<dbReference type="Gene3D" id="1.20.5.510">
    <property type="entry name" value="Single helix bin"/>
    <property type="match status" value="1"/>
</dbReference>
<dbReference type="HAMAP" id="MF_00522">
    <property type="entry name" value="PSI_PsaJ"/>
    <property type="match status" value="1"/>
</dbReference>
<dbReference type="InterPro" id="IPR002615">
    <property type="entry name" value="PSI_PsaJ"/>
</dbReference>
<dbReference type="InterPro" id="IPR036062">
    <property type="entry name" value="PSI_PsaJ_sf"/>
</dbReference>
<dbReference type="PANTHER" id="PTHR36082">
    <property type="match status" value="1"/>
</dbReference>
<dbReference type="PANTHER" id="PTHR36082:SF2">
    <property type="entry name" value="PHOTOSYSTEM I REACTION CENTER SUBUNIT IX"/>
    <property type="match status" value="1"/>
</dbReference>
<dbReference type="Pfam" id="PF01701">
    <property type="entry name" value="PSI_PsaJ"/>
    <property type="match status" value="1"/>
</dbReference>
<dbReference type="SUPFAM" id="SSF81544">
    <property type="entry name" value="Subunit IX of photosystem I reaction centre, PsaJ"/>
    <property type="match status" value="1"/>
</dbReference>
<reference key="1">
    <citation type="journal article" date="2003" name="Mol. Phylogenet. Evol.">
        <title>Conflicting phylogenies of Larix (Pinaceae) based on cytoplasmic and nuclear DNA.</title>
        <authorList>
            <person name="Semerikov V.L."/>
            <person name="Zhang H."/>
            <person name="Sun M."/>
            <person name="Lascoux M."/>
        </authorList>
    </citation>
    <scope>NUCLEOTIDE SEQUENCE [GENOMIC DNA]</scope>
</reference>
<proteinExistence type="inferred from homology"/>
<sequence length="44" mass="4975">MQDLKTYLSTAPVLAISWLIFVAGLLIEINRFFPDALTLTFPSF</sequence>
<accession>Q85V00</accession>
<name>PSAJ_LARDC</name>
<feature type="chain" id="PRO_0000207793" description="Photosystem I reaction center subunit IX">
    <location>
        <begin position="1"/>
        <end position="44"/>
    </location>
</feature>
<feature type="transmembrane region" description="Helical" evidence="1">
    <location>
        <begin position="7"/>
        <end position="27"/>
    </location>
</feature>
<evidence type="ECO:0000255" key="1">
    <source>
        <dbReference type="HAMAP-Rule" id="MF_00522"/>
    </source>
</evidence>
<geneLocation type="chloroplast"/>